<protein>
    <recommendedName>
        <fullName>Probable flavin-containing monoamine oxidase B</fullName>
        <ecNumber>1.4.3.4</ecNumber>
    </recommendedName>
</protein>
<keyword id="KW-0274">FAD</keyword>
<keyword id="KW-0285">Flavoprotein</keyword>
<keyword id="KW-0560">Oxidoreductase</keyword>
<keyword id="KW-1185">Reference proteome</keyword>
<organism>
    <name type="scientific">Dictyostelium discoideum</name>
    <name type="common">Social amoeba</name>
    <dbReference type="NCBI Taxonomy" id="44689"/>
    <lineage>
        <taxon>Eukaryota</taxon>
        <taxon>Amoebozoa</taxon>
        <taxon>Evosea</taxon>
        <taxon>Eumycetozoa</taxon>
        <taxon>Dictyostelia</taxon>
        <taxon>Dictyosteliales</taxon>
        <taxon>Dictyosteliaceae</taxon>
        <taxon>Dictyostelium</taxon>
    </lineage>
</organism>
<gene>
    <name type="primary">maoB-1</name>
    <name type="ORF">DDB_G0272582</name>
</gene>
<gene>
    <name type="primary">maoB-2</name>
    <name type="ORF">DDB_G0273993</name>
</gene>
<comment type="catalytic activity">
    <reaction>
        <text>a secondary aliphatic amine + O2 + H2O = a primary amine + an aldehyde + H2O2</text>
        <dbReference type="Rhea" id="RHEA:26414"/>
        <dbReference type="ChEBI" id="CHEBI:15377"/>
        <dbReference type="ChEBI" id="CHEBI:15379"/>
        <dbReference type="ChEBI" id="CHEBI:16240"/>
        <dbReference type="ChEBI" id="CHEBI:17478"/>
        <dbReference type="ChEBI" id="CHEBI:58855"/>
        <dbReference type="ChEBI" id="CHEBI:65296"/>
        <dbReference type="EC" id="1.4.3.4"/>
    </reaction>
</comment>
<comment type="cofactor">
    <cofactor>
        <name>FAD</name>
        <dbReference type="ChEBI" id="CHEBI:57692"/>
    </cofactor>
</comment>
<comment type="similarity">
    <text evidence="2">Belongs to the flavin monoamine oxidase family.</text>
</comment>
<comment type="caution">
    <text evidence="2">The gene for this protein is duplicated in strains AX3 and AX4. These strains contain a duplication of a segment of 750 kb of chromosome 2 compared to the corresponding sequence in strain AX2.</text>
</comment>
<reference key="1">
    <citation type="journal article" date="2002" name="Nature">
        <title>Sequence and analysis of chromosome 2 of Dictyostelium discoideum.</title>
        <authorList>
            <person name="Gloeckner G."/>
            <person name="Eichinger L."/>
            <person name="Szafranski K."/>
            <person name="Pachebat J.A."/>
            <person name="Bankier A.T."/>
            <person name="Dear P.H."/>
            <person name="Lehmann R."/>
            <person name="Baumgart C."/>
            <person name="Parra G."/>
            <person name="Abril J.F."/>
            <person name="Guigo R."/>
            <person name="Kumpf K."/>
            <person name="Tunggal B."/>
            <person name="Cox E.C."/>
            <person name="Quail M.A."/>
            <person name="Platzer M."/>
            <person name="Rosenthal A."/>
            <person name="Noegel A.A."/>
        </authorList>
    </citation>
    <scope>NUCLEOTIDE SEQUENCE [LARGE SCALE GENOMIC DNA]</scope>
    <source>
        <strain>AX4</strain>
    </source>
</reference>
<reference key="2">
    <citation type="journal article" date="2005" name="Nature">
        <title>The genome of the social amoeba Dictyostelium discoideum.</title>
        <authorList>
            <person name="Eichinger L."/>
            <person name="Pachebat J.A."/>
            <person name="Gloeckner G."/>
            <person name="Rajandream M.A."/>
            <person name="Sucgang R."/>
            <person name="Berriman M."/>
            <person name="Song J."/>
            <person name="Olsen R."/>
            <person name="Szafranski K."/>
            <person name="Xu Q."/>
            <person name="Tunggal B."/>
            <person name="Kummerfeld S."/>
            <person name="Madera M."/>
            <person name="Konfortov B.A."/>
            <person name="Rivero F."/>
            <person name="Bankier A.T."/>
            <person name="Lehmann R."/>
            <person name="Hamlin N."/>
            <person name="Davies R."/>
            <person name="Gaudet P."/>
            <person name="Fey P."/>
            <person name="Pilcher K."/>
            <person name="Chen G."/>
            <person name="Saunders D."/>
            <person name="Sodergren E.J."/>
            <person name="Davis P."/>
            <person name="Kerhornou A."/>
            <person name="Nie X."/>
            <person name="Hall N."/>
            <person name="Anjard C."/>
            <person name="Hemphill L."/>
            <person name="Bason N."/>
            <person name="Farbrother P."/>
            <person name="Desany B."/>
            <person name="Just E."/>
            <person name="Morio T."/>
            <person name="Rost R."/>
            <person name="Churcher C.M."/>
            <person name="Cooper J."/>
            <person name="Haydock S."/>
            <person name="van Driessche N."/>
            <person name="Cronin A."/>
            <person name="Goodhead I."/>
            <person name="Muzny D.M."/>
            <person name="Mourier T."/>
            <person name="Pain A."/>
            <person name="Lu M."/>
            <person name="Harper D."/>
            <person name="Lindsay R."/>
            <person name="Hauser H."/>
            <person name="James K.D."/>
            <person name="Quiles M."/>
            <person name="Madan Babu M."/>
            <person name="Saito T."/>
            <person name="Buchrieser C."/>
            <person name="Wardroper A."/>
            <person name="Felder M."/>
            <person name="Thangavelu M."/>
            <person name="Johnson D."/>
            <person name="Knights A."/>
            <person name="Loulseged H."/>
            <person name="Mungall K.L."/>
            <person name="Oliver K."/>
            <person name="Price C."/>
            <person name="Quail M.A."/>
            <person name="Urushihara H."/>
            <person name="Hernandez J."/>
            <person name="Rabbinowitsch E."/>
            <person name="Steffen D."/>
            <person name="Sanders M."/>
            <person name="Ma J."/>
            <person name="Kohara Y."/>
            <person name="Sharp S."/>
            <person name="Simmonds M.N."/>
            <person name="Spiegler S."/>
            <person name="Tivey A."/>
            <person name="Sugano S."/>
            <person name="White B."/>
            <person name="Walker D."/>
            <person name="Woodward J.R."/>
            <person name="Winckler T."/>
            <person name="Tanaka Y."/>
            <person name="Shaulsky G."/>
            <person name="Schleicher M."/>
            <person name="Weinstock G.M."/>
            <person name="Rosenthal A."/>
            <person name="Cox E.C."/>
            <person name="Chisholm R.L."/>
            <person name="Gibbs R.A."/>
            <person name="Loomis W.F."/>
            <person name="Platzer M."/>
            <person name="Kay R.R."/>
            <person name="Williams J.G."/>
            <person name="Dear P.H."/>
            <person name="Noegel A.A."/>
            <person name="Barrell B.G."/>
            <person name="Kuspa A."/>
        </authorList>
    </citation>
    <scope>NUCLEOTIDE SEQUENCE [LARGE SCALE GENOMIC DNA]</scope>
    <source>
        <strain>AX4</strain>
    </source>
</reference>
<accession>Q556K3</accession>
<accession>Q86AM6</accession>
<name>AOFB_DICDI</name>
<feature type="chain" id="PRO_0000328629" description="Probable flavin-containing monoamine oxidase B">
    <location>
        <begin position="1"/>
        <end position="471"/>
    </location>
</feature>
<feature type="modified residue" description="S-8alpha-FAD cysteine" evidence="1">
    <location>
        <position position="406"/>
    </location>
</feature>
<evidence type="ECO:0000250" key="1"/>
<evidence type="ECO:0000305" key="2"/>
<sequence>MEMEILYNYDTIIIGGGLSGLNTAYDLKKSNFKILVLEARNRFGGRTDSVKVGDGWVDAGGQWLGTNNPNLKQLCKELKLETYKQFYQGKTVFDIYDDGLIKSFDESSPNFDLCEIGLGNINPIIRAIKEVMKNIDFSKCSKESPIMLSLEKLTVSEWLRVCGYGESVKFFNWFCKMSVASSSDDISILFLLKYVNSINGFESLFISDDDCTESDRIIGGSSMVSERIVSYLKDDCKLNCEVTLIDQISHKNSRLIKITTSNNENYYCRNVVSTIPPMLLKNVIFKPDLPIEKQRLKNEMEMGNTIKVIVIYDSVFWRDQGYNGKSQSFVGPIYQSFDNCTNDLSVKSIIGFINGKEEIKYWYSKSLEERRSAVLNQYSKYWGPKALNPIHYIERNWSLDKYSAGCFMGVCKSGDIISQCNNYYTQPHGNIHWAGTETSTQWYGHMEGAITSSKRVVNEILKNSLNSKSKL</sequence>
<dbReference type="EC" id="1.4.3.4"/>
<dbReference type="EMBL" id="AAFI02000011">
    <property type="protein sequence ID" value="EAL70430.1"/>
    <property type="molecule type" value="Genomic_DNA"/>
</dbReference>
<dbReference type="EMBL" id="AAFI02000009">
    <property type="protein sequence ID" value="EAL70928.1"/>
    <property type="molecule type" value="Genomic_DNA"/>
</dbReference>
<dbReference type="RefSeq" id="XP_644355.1">
    <property type="nucleotide sequence ID" value="XM_639263.1"/>
</dbReference>
<dbReference type="RefSeq" id="XP_645059.1">
    <property type="nucleotide sequence ID" value="XM_639967.1"/>
</dbReference>
<dbReference type="SMR" id="Q556K3"/>
<dbReference type="FunCoup" id="Q556K3">
    <property type="interactions" value="23"/>
</dbReference>
<dbReference type="STRING" id="44689.Q556K3"/>
<dbReference type="PaxDb" id="44689-DDB0231711"/>
<dbReference type="EnsemblProtists" id="EAL70430">
    <property type="protein sequence ID" value="EAL70430"/>
    <property type="gene ID" value="DDB_G0273993"/>
</dbReference>
<dbReference type="EnsemblProtists" id="EAL70928">
    <property type="protein sequence ID" value="EAL70928"/>
    <property type="gene ID" value="DDB_G0272582"/>
</dbReference>
<dbReference type="GeneID" id="8618734"/>
<dbReference type="GeneID" id="8619242"/>
<dbReference type="KEGG" id="ddi:DDB_G0272582"/>
<dbReference type="KEGG" id="ddi:DDB_G0273993"/>
<dbReference type="dictyBase" id="DDB_G0272582">
    <property type="gene designation" value="maoB-1"/>
</dbReference>
<dbReference type="dictyBase" id="DDB_G0273993">
    <property type="gene designation" value="maoB-2"/>
</dbReference>
<dbReference type="VEuPathDB" id="AmoebaDB:DDB_G0273993"/>
<dbReference type="eggNOG" id="KOG0029">
    <property type="taxonomic scope" value="Eukaryota"/>
</dbReference>
<dbReference type="HOGENOM" id="CLU_004498_0_4_1"/>
<dbReference type="InParanoid" id="Q556K3"/>
<dbReference type="OMA" id="LWARVMH"/>
<dbReference type="PhylomeDB" id="Q556K3"/>
<dbReference type="Reactome" id="R-DDI-141333">
    <property type="pathway name" value="Biogenic amines are oxidatively deaminated to aldehydes by MAOA and MAOB"/>
</dbReference>
<dbReference type="Reactome" id="R-DDI-181430">
    <property type="pathway name" value="Norepinephrine Neurotransmitter Release Cycle"/>
</dbReference>
<dbReference type="Reactome" id="R-DDI-379397">
    <property type="pathway name" value="Enzymatic degradation of dopamine by COMT"/>
</dbReference>
<dbReference type="Reactome" id="R-DDI-379398">
    <property type="pathway name" value="Enzymatic degradation of Dopamine by monoamine oxidase"/>
</dbReference>
<dbReference type="Reactome" id="R-DDI-379401">
    <property type="pathway name" value="Dopamine clearance from the synaptic cleft"/>
</dbReference>
<dbReference type="Reactome" id="R-DDI-380612">
    <property type="pathway name" value="Metabolism of serotonin"/>
</dbReference>
<dbReference type="PRO" id="PR:Q556K3"/>
<dbReference type="Proteomes" id="UP000002195">
    <property type="component" value="Chromosome 2"/>
</dbReference>
<dbReference type="GO" id="GO:0097621">
    <property type="term" value="F:monoamine oxidase activity"/>
    <property type="evidence" value="ECO:0007669"/>
    <property type="project" value="UniProtKB-EC"/>
</dbReference>
<dbReference type="FunFam" id="3.50.50.60:FF:000701">
    <property type="entry name" value="Probable flavin-containing monoamine oxidase B"/>
    <property type="match status" value="1"/>
</dbReference>
<dbReference type="Gene3D" id="3.50.50.60">
    <property type="entry name" value="FAD/NAD(P)-binding domain"/>
    <property type="match status" value="1"/>
</dbReference>
<dbReference type="InterPro" id="IPR002937">
    <property type="entry name" value="Amino_oxidase"/>
</dbReference>
<dbReference type="InterPro" id="IPR036188">
    <property type="entry name" value="FAD/NAD-bd_sf"/>
</dbReference>
<dbReference type="InterPro" id="IPR001613">
    <property type="entry name" value="Flavin_amine_oxidase"/>
</dbReference>
<dbReference type="InterPro" id="IPR050703">
    <property type="entry name" value="Flavin_MAO"/>
</dbReference>
<dbReference type="PANTHER" id="PTHR43563">
    <property type="entry name" value="AMINE OXIDASE"/>
    <property type="match status" value="1"/>
</dbReference>
<dbReference type="PANTHER" id="PTHR43563:SF19">
    <property type="entry name" value="FLAVIN-CONTAINING MONOAMINE OXIDASE B-RELATED"/>
    <property type="match status" value="1"/>
</dbReference>
<dbReference type="Pfam" id="PF01593">
    <property type="entry name" value="Amino_oxidase"/>
    <property type="match status" value="1"/>
</dbReference>
<dbReference type="PRINTS" id="PR00757">
    <property type="entry name" value="AMINEOXDASEF"/>
</dbReference>
<dbReference type="SUPFAM" id="SSF54373">
    <property type="entry name" value="FAD-linked reductases, C-terminal domain"/>
    <property type="match status" value="1"/>
</dbReference>
<dbReference type="SUPFAM" id="SSF51905">
    <property type="entry name" value="FAD/NAD(P)-binding domain"/>
    <property type="match status" value="1"/>
</dbReference>
<proteinExistence type="inferred from homology"/>